<feature type="chain" id="PRO_0000418617" description="L-lysine 6-oxidase">
    <location>
        <begin position="1"/>
        <end position="726"/>
    </location>
</feature>
<feature type="modified residue" description="Tryptophylquinone">
    <location>
        <position position="581"/>
    </location>
</feature>
<feature type="cross-link" description="4'-cysteinyl-tryptophylquinone (Cys-Trp)">
    <location>
        <begin position="516"/>
        <end position="581"/>
    </location>
</feature>
<feature type="sequence conflict" description="In Ref. 1; AA sequence." evidence="7" ref="1">
    <original>M</original>
    <variation>L</variation>
    <location>
        <position position="1"/>
    </location>
</feature>
<feature type="strand" evidence="10">
    <location>
        <begin position="4"/>
        <end position="13"/>
    </location>
</feature>
<feature type="strand" evidence="10">
    <location>
        <begin position="22"/>
        <end position="24"/>
    </location>
</feature>
<feature type="strand" evidence="10">
    <location>
        <begin position="34"/>
        <end position="36"/>
    </location>
</feature>
<feature type="strand" evidence="10">
    <location>
        <begin position="42"/>
        <end position="45"/>
    </location>
</feature>
<feature type="strand" evidence="10">
    <location>
        <begin position="58"/>
        <end position="66"/>
    </location>
</feature>
<feature type="turn" evidence="9">
    <location>
        <begin position="68"/>
        <end position="70"/>
    </location>
</feature>
<feature type="strand" evidence="9">
    <location>
        <begin position="71"/>
        <end position="73"/>
    </location>
</feature>
<feature type="strand" evidence="10">
    <location>
        <begin position="80"/>
        <end position="91"/>
    </location>
</feature>
<feature type="helix" evidence="10">
    <location>
        <begin position="93"/>
        <end position="95"/>
    </location>
</feature>
<feature type="turn" evidence="10">
    <location>
        <begin position="101"/>
        <end position="104"/>
    </location>
</feature>
<feature type="helix" evidence="10">
    <location>
        <begin position="106"/>
        <end position="108"/>
    </location>
</feature>
<feature type="helix" evidence="10">
    <location>
        <begin position="110"/>
        <end position="112"/>
    </location>
</feature>
<feature type="turn" evidence="10">
    <location>
        <begin position="114"/>
        <end position="118"/>
    </location>
</feature>
<feature type="strand" evidence="10">
    <location>
        <begin position="121"/>
        <end position="123"/>
    </location>
</feature>
<feature type="helix" evidence="10">
    <location>
        <begin position="129"/>
        <end position="134"/>
    </location>
</feature>
<feature type="strand" evidence="10">
    <location>
        <begin position="136"/>
        <end position="138"/>
    </location>
</feature>
<feature type="strand" evidence="10">
    <location>
        <begin position="142"/>
        <end position="146"/>
    </location>
</feature>
<feature type="strand" evidence="10">
    <location>
        <begin position="150"/>
        <end position="154"/>
    </location>
</feature>
<feature type="strand" evidence="10">
    <location>
        <begin position="173"/>
        <end position="175"/>
    </location>
</feature>
<feature type="strand" evidence="10">
    <location>
        <begin position="181"/>
        <end position="187"/>
    </location>
</feature>
<feature type="strand" evidence="10">
    <location>
        <begin position="193"/>
        <end position="196"/>
    </location>
</feature>
<feature type="strand" evidence="10">
    <location>
        <begin position="202"/>
        <end position="206"/>
    </location>
</feature>
<feature type="strand" evidence="10">
    <location>
        <begin position="217"/>
        <end position="219"/>
    </location>
</feature>
<feature type="strand" evidence="10">
    <location>
        <begin position="223"/>
        <end position="232"/>
    </location>
</feature>
<feature type="strand" evidence="10">
    <location>
        <begin position="237"/>
        <end position="248"/>
    </location>
</feature>
<feature type="strand" evidence="10">
    <location>
        <begin position="258"/>
        <end position="260"/>
    </location>
</feature>
<feature type="helix" evidence="10">
    <location>
        <begin position="261"/>
        <end position="272"/>
    </location>
</feature>
<feature type="turn" evidence="10">
    <location>
        <begin position="277"/>
        <end position="279"/>
    </location>
</feature>
<feature type="turn" evidence="10">
    <location>
        <begin position="282"/>
        <end position="285"/>
    </location>
</feature>
<feature type="helix" evidence="10">
    <location>
        <begin position="295"/>
        <end position="298"/>
    </location>
</feature>
<feature type="helix" evidence="10">
    <location>
        <begin position="300"/>
        <end position="308"/>
    </location>
</feature>
<feature type="helix" evidence="10">
    <location>
        <begin position="309"/>
        <end position="311"/>
    </location>
</feature>
<feature type="helix" evidence="10">
    <location>
        <begin position="316"/>
        <end position="321"/>
    </location>
</feature>
<feature type="helix" evidence="10">
    <location>
        <begin position="333"/>
        <end position="335"/>
    </location>
</feature>
<feature type="helix" evidence="10">
    <location>
        <begin position="336"/>
        <end position="344"/>
    </location>
</feature>
<feature type="helix" evidence="10">
    <location>
        <begin position="360"/>
        <end position="362"/>
    </location>
</feature>
<feature type="strand" evidence="10">
    <location>
        <begin position="380"/>
        <end position="387"/>
    </location>
</feature>
<feature type="strand" evidence="10">
    <location>
        <begin position="400"/>
        <end position="402"/>
    </location>
</feature>
<feature type="helix" evidence="10">
    <location>
        <begin position="407"/>
        <end position="418"/>
    </location>
</feature>
<feature type="strand" evidence="11">
    <location>
        <begin position="421"/>
        <end position="424"/>
    </location>
</feature>
<feature type="helix" evidence="10">
    <location>
        <begin position="433"/>
        <end position="439"/>
    </location>
</feature>
<feature type="helix" evidence="10">
    <location>
        <begin position="455"/>
        <end position="458"/>
    </location>
</feature>
<feature type="helix" evidence="10">
    <location>
        <begin position="460"/>
        <end position="462"/>
    </location>
</feature>
<feature type="strand" evidence="10">
    <location>
        <begin position="463"/>
        <end position="465"/>
    </location>
</feature>
<feature type="helix" evidence="10">
    <location>
        <begin position="475"/>
        <end position="481"/>
    </location>
</feature>
<feature type="helix" evidence="10">
    <location>
        <begin position="489"/>
        <end position="492"/>
    </location>
</feature>
<feature type="turn" evidence="10">
    <location>
        <begin position="498"/>
        <end position="504"/>
    </location>
</feature>
<feature type="helix" evidence="10">
    <location>
        <begin position="510"/>
        <end position="515"/>
    </location>
</feature>
<feature type="strand" evidence="10">
    <location>
        <begin position="517"/>
        <end position="522"/>
    </location>
</feature>
<feature type="strand" evidence="10">
    <location>
        <begin position="529"/>
        <end position="543"/>
    </location>
</feature>
<feature type="strand" evidence="10">
    <location>
        <begin position="557"/>
        <end position="571"/>
    </location>
</feature>
<feature type="strand" evidence="10">
    <location>
        <begin position="573"/>
        <end position="580"/>
    </location>
</feature>
<feature type="turn" evidence="10">
    <location>
        <begin position="582"/>
        <end position="584"/>
    </location>
</feature>
<feature type="strand" evidence="10">
    <location>
        <begin position="588"/>
        <end position="590"/>
    </location>
</feature>
<feature type="helix" evidence="10">
    <location>
        <begin position="596"/>
        <end position="602"/>
    </location>
</feature>
<feature type="strand" evidence="10">
    <location>
        <begin position="609"/>
        <end position="611"/>
    </location>
</feature>
<feature type="turn" evidence="10">
    <location>
        <begin position="612"/>
        <end position="615"/>
    </location>
</feature>
<feature type="helix" evidence="10">
    <location>
        <begin position="619"/>
        <end position="625"/>
    </location>
</feature>
<feature type="helix" evidence="10">
    <location>
        <begin position="626"/>
        <end position="628"/>
    </location>
</feature>
<feature type="strand" evidence="10">
    <location>
        <begin position="631"/>
        <end position="634"/>
    </location>
</feature>
<feature type="turn" evidence="10">
    <location>
        <begin position="635"/>
        <end position="638"/>
    </location>
</feature>
<feature type="strand" evidence="10">
    <location>
        <begin position="645"/>
        <end position="649"/>
    </location>
</feature>
<feature type="helix" evidence="10">
    <location>
        <begin position="652"/>
        <end position="654"/>
    </location>
</feature>
<feature type="strand" evidence="10">
    <location>
        <begin position="656"/>
        <end position="661"/>
    </location>
</feature>
<feature type="helix" evidence="10">
    <location>
        <begin position="662"/>
        <end position="666"/>
    </location>
</feature>
<feature type="helix" evidence="10">
    <location>
        <begin position="669"/>
        <end position="673"/>
    </location>
</feature>
<feature type="strand" evidence="10">
    <location>
        <begin position="674"/>
        <end position="680"/>
    </location>
</feature>
<keyword id="KW-0002">3D-structure</keyword>
<keyword id="KW-0044">Antibiotic</keyword>
<keyword id="KW-0929">Antimicrobial</keyword>
<keyword id="KW-0885">CTQ</keyword>
<keyword id="KW-0903">Direct protein sequencing</keyword>
<keyword id="KW-0560">Oxidoreductase</keyword>
<keyword id="KW-0874">Quinone</keyword>
<keyword id="KW-1185">Reference proteome</keyword>
<keyword id="KW-0964">Secreted</keyword>
<keyword id="KW-0883">Thioether bond</keyword>
<accession>F2JXJ3</accession>
<accession>Q24K54</accession>
<sequence length="726" mass="80880">MALSVHPSIGVARLGNANTDNFVLNPMEIGGLPYEHDVDLKPTTTVVNFKDEAGCIRRQGQVFKVFGASNEELTLDSPNVKNIEWTVHLANKKAAWYEFRELNGNLLYGRDNSYSARGVPWRNASKTASSERQSLIIDLGPRSVSGVMATVEISINNIPETYLHPSYPSGELLQGSKHFESLGTLRTDSQGRLIVLGGYGFAGGNTDLSGYGGGDDWYDDISDGSVTCVVTYSDDSSETSTAWMVVGSPDFAPEIVNISTLSDTCFDVGVRNFDLVPDMYDSATGHYKSDYVANFDRDILPIIQRISQYQWVSNVQSMSGFFSFQFDYRDGSAANKANRMKYYNYFRQLDNKVIGDYDQPQQVLMSSEVEGDILPLMPMNSGSNSVSSSNFYDLTDNVVEKFLALDATQLFLLGQWAEGEFTAGPADDYPVSDMDTASIGNCVGLPMCPGIEMTWSLQNPVIYKDAYQIKHYQDKAYFDVNGLTPERDECEEETGCEPGDLTKRMACPWQADFFNCTIQTVNFSEPSVNKASQTETVTSRTHYEWGNLPAGVSVPDQSSVSATKNVDEKVPLPPAYYSYWWPPQSPWDVLTGELDTEGQLHSHLPAGQQINYARGINSYSQMVEHWSALAFIRDRNQNNDGFPFFTETERNHELFDFKEVLVGQVTGNSEDNETSLPVFFINANKESLEGKGTKKGKLMASYFEERAFSKVRSSNIRPRSGTRMRG</sequence>
<gene>
    <name type="primary">lodA</name>
    <name type="ordered locus">Marme_2662</name>
</gene>
<protein>
    <recommendedName>
        <fullName>L-lysine 6-oxidase</fullName>
        <ecNumber>1.4.3.20</ecNumber>
    </recommendedName>
    <alternativeName>
        <fullName>L-lysine-epsilon-oxidase</fullName>
    </alternativeName>
    <alternativeName>
        <fullName>Marinocine</fullName>
    </alternativeName>
</protein>
<comment type="function">
    <text evidence="1 4 5">Has antibacterial activity against a wide spectrum of Gram-positive and Gram-negative bacteria including nosocomial isolates of S.aureus and Pseudomonas sp. The antimicrobial activity is due to hydrogen peroxide generated by its lysine oxidase activity. Also has autotoxic activity. Involved in biofilm differentiation; responsible for cell death within microcolonies during biofilm development which is linked to the generation of a phenotypically diverse dispersal population and thus may play a role in colonization.</text>
</comment>
<comment type="catalytic activity">
    <reaction evidence="2 3">
        <text>L-lysine + O2 + H2O = (S)-2-amino-6-oxohexanoate + H2O2 + NH4(+)</text>
        <dbReference type="Rhea" id="RHEA:22548"/>
        <dbReference type="ChEBI" id="CHEBI:15377"/>
        <dbReference type="ChEBI" id="CHEBI:15379"/>
        <dbReference type="ChEBI" id="CHEBI:16240"/>
        <dbReference type="ChEBI" id="CHEBI:28938"/>
        <dbReference type="ChEBI" id="CHEBI:32551"/>
        <dbReference type="ChEBI" id="CHEBI:58321"/>
        <dbReference type="EC" id="1.4.3.20"/>
    </reaction>
</comment>
<comment type="cofactor">
    <cofactor evidence="3 5">
        <name>cysteine tryptophylquinone residue</name>
        <dbReference type="ChEBI" id="CHEBI:20252"/>
    </cofactor>
    <text evidence="3 5">Contains 1 cysteine tryptophylquinone per subunit.</text>
</comment>
<comment type="activity regulation">
    <text evidence="3">Inhibited by aminoguanidine, amiloride and beta-aminopropionitrile.</text>
</comment>
<comment type="biophysicochemical properties">
    <kinetics>
        <KM>2.8 uM for L-lysine</KM>
        <text>Also uses N(2)-acetyl-L-lysine as substrate.</text>
    </kinetics>
</comment>
<comment type="subunit">
    <text evidence="6">Homotetramer.</text>
</comment>
<comment type="subcellular location">
    <subcellularLocation>
        <location evidence="1 5">Secreted</location>
    </subcellularLocation>
</comment>
<comment type="induction">
    <text>Forms part of an operon with lodB.</text>
</comment>
<comment type="PTM">
    <text evidence="6">The cysteine tryptophylquinone (CTQ) is generated by oxidation of the indole ring of a tryptophan residue to form tryptophylquinone, followed by covalent cross-linking with a cysteine residue.</text>
</comment>
<comment type="miscellaneous">
    <text evidence="8">The intracellular stability of LodA is dependent on the presence of LodB protein.</text>
</comment>
<dbReference type="EC" id="1.4.3.20"/>
<dbReference type="EMBL" id="AY968053">
    <property type="protein sequence ID" value="AAY33849.1"/>
    <property type="molecule type" value="Genomic_DNA"/>
</dbReference>
<dbReference type="EMBL" id="CP002583">
    <property type="protein sequence ID" value="ADZ91893.1"/>
    <property type="molecule type" value="Genomic_DNA"/>
</dbReference>
<dbReference type="RefSeq" id="WP_013661796.1">
    <property type="nucleotide sequence ID" value="NC_015276.1"/>
</dbReference>
<dbReference type="PDB" id="2YMW">
    <property type="method" value="X-ray"/>
    <property type="resolution" value="2.41 A"/>
    <property type="chains" value="A/B=1-726"/>
</dbReference>
<dbReference type="PDB" id="3WEU">
    <property type="method" value="X-ray"/>
    <property type="resolution" value="1.93 A"/>
    <property type="chains" value="A/B=1-726"/>
</dbReference>
<dbReference type="PDB" id="3WEV">
    <property type="method" value="X-ray"/>
    <property type="resolution" value="1.98 A"/>
    <property type="chains" value="A/B=1-726"/>
</dbReference>
<dbReference type="PDBsum" id="2YMW"/>
<dbReference type="PDBsum" id="3WEU"/>
<dbReference type="PDBsum" id="3WEV"/>
<dbReference type="SMR" id="F2JXJ3"/>
<dbReference type="STRING" id="717774.Marme_2662"/>
<dbReference type="KEGG" id="mme:Marme_2662"/>
<dbReference type="PATRIC" id="fig|717774.3.peg.2748"/>
<dbReference type="eggNOG" id="ENOG502Z8IE">
    <property type="taxonomic scope" value="Bacteria"/>
</dbReference>
<dbReference type="HOGENOM" id="CLU_012035_1_0_6"/>
<dbReference type="OrthoDB" id="336698at2"/>
<dbReference type="BioCyc" id="MetaCyc:MONOMER-15838"/>
<dbReference type="BRENDA" id="1.4.3.20">
    <property type="organism ID" value="9077"/>
</dbReference>
<dbReference type="EvolutionaryTrace" id="F2JXJ3"/>
<dbReference type="Proteomes" id="UP000001062">
    <property type="component" value="Chromosome"/>
</dbReference>
<dbReference type="GO" id="GO:0005576">
    <property type="term" value="C:extracellular region"/>
    <property type="evidence" value="ECO:0000314"/>
    <property type="project" value="UniProtKB"/>
</dbReference>
<dbReference type="GO" id="GO:0033736">
    <property type="term" value="F:L-lysine 6-oxidase activity"/>
    <property type="evidence" value="ECO:0000314"/>
    <property type="project" value="UniProtKB"/>
</dbReference>
<dbReference type="GO" id="GO:0048038">
    <property type="term" value="F:quinone binding"/>
    <property type="evidence" value="ECO:0007669"/>
    <property type="project" value="UniProtKB-KW"/>
</dbReference>
<dbReference type="GO" id="GO:0042742">
    <property type="term" value="P:defense response to bacterium"/>
    <property type="evidence" value="ECO:0007669"/>
    <property type="project" value="UniProtKB-KW"/>
</dbReference>
<dbReference type="GO" id="GO:0031640">
    <property type="term" value="P:killing of cells of another organism"/>
    <property type="evidence" value="ECO:0000314"/>
    <property type="project" value="UniProtKB"/>
</dbReference>
<dbReference type="GO" id="GO:1900191">
    <property type="term" value="P:negative regulation of single-species biofilm formation"/>
    <property type="evidence" value="ECO:0000314"/>
    <property type="project" value="UniProtKB"/>
</dbReference>
<dbReference type="CDD" id="cd14732">
    <property type="entry name" value="LodA"/>
    <property type="match status" value="1"/>
</dbReference>
<dbReference type="InterPro" id="IPR033797">
    <property type="entry name" value="LodA"/>
</dbReference>
<dbReference type="InterPro" id="IPR041173">
    <property type="entry name" value="LodA_C"/>
</dbReference>
<dbReference type="InterPro" id="IPR041168">
    <property type="entry name" value="LodA_N"/>
</dbReference>
<dbReference type="NCBIfam" id="NF038172">
    <property type="entry name" value="Lys_ox_CTQ_LodA"/>
    <property type="match status" value="1"/>
</dbReference>
<dbReference type="Pfam" id="PF18417">
    <property type="entry name" value="LodA_C"/>
    <property type="match status" value="1"/>
</dbReference>
<dbReference type="Pfam" id="PF17990">
    <property type="entry name" value="LodA_N"/>
    <property type="match status" value="1"/>
</dbReference>
<name>LODA_MARM1</name>
<reference key="1">
    <citation type="journal article" date="2006" name="J. Bacteriol.">
        <title>The antimicrobial activity of marinocine, synthesized by Marinomonas mediterranea, is due to hydrogen peroxide generated by its lysine oxidase activity.</title>
        <authorList>
            <person name="Lucas-Elio P."/>
            <person name="Gomez D."/>
            <person name="Solano F."/>
            <person name="Sanchez-Amat A."/>
        </authorList>
    </citation>
    <scope>NUCLEOTIDE SEQUENCE [GENOMIC DNA]</scope>
    <scope>PROTEIN SEQUENCE OF 1-8</scope>
    <scope>CATALYTIC ACTIVITY</scope>
    <source>
        <strain>ATCC 700492 / JCM 21426 / NBRC 103028 / MMB-1</strain>
    </source>
</reference>
<reference key="2">
    <citation type="journal article" date="2012" name="Stand. Genomic Sci.">
        <title>Complete genome sequence of the melanogenic marine bacterium Marinomonas mediterranea type strain (MMB-1(T)).</title>
        <authorList>
            <person name="Lucas-Elio P."/>
            <person name="Goodwin L."/>
            <person name="Woyke T."/>
            <person name="Pitluck S."/>
            <person name="Nolan M."/>
            <person name="Kyrpides N.C."/>
            <person name="Detter J.C."/>
            <person name="Copeland A."/>
            <person name="Teshima H."/>
            <person name="Bruce D."/>
            <person name="Detter C."/>
            <person name="Tapia R."/>
            <person name="Han S."/>
            <person name="Land M.L."/>
            <person name="Ivanova N."/>
            <person name="Mikhailova N."/>
            <person name="Johnston A.W."/>
            <person name="Sanchez-Amat A."/>
        </authorList>
    </citation>
    <scope>NUCLEOTIDE SEQUENCE [LARGE SCALE GENOMIC DNA]</scope>
    <source>
        <strain>ATCC 700492 / JCM 21426 / NBRC 103028 / MMB-1</strain>
    </source>
</reference>
<reference key="3">
    <citation type="journal article" date="2005" name="Biochim. Biophys. Acta">
        <title>Purification and partial characterization of marinocine, a new broad-spectrum antibacterial protein produced by Marinomonas mediterranea.</title>
        <authorList>
            <person name="Lucas-Elio P."/>
            <person name="Hernandez P."/>
            <person name="Sanchez-Amat A."/>
            <person name="Solano F."/>
        </authorList>
    </citation>
    <scope>FUNCTION</scope>
    <scope>SUBCELLULAR LOCATION</scope>
    <source>
        <strain>ATCC 700492 / JCM 21426 / NBRC 103028 / MMB-1</strain>
    </source>
</reference>
<reference key="4">
    <citation type="journal article" date="2006" name="Biochim. Biophys. Acta">
        <title>A novel type of lysine oxidase: L-lysine-epsilon-oxidase.</title>
        <authorList>
            <person name="Gomez D."/>
            <person name="Lucas-Elio P."/>
            <person name="Sanchez-Amat A."/>
            <person name="Solano F."/>
        </authorList>
    </citation>
    <scope>CATALYTIC ACTIVITY</scope>
    <scope>COFACTOR</scope>
    <scope>ACTIVITY REGULATION</scope>
    <source>
        <strain>ATCC 700492 / JCM 21426 / NBRC 103028 / MMB-1</strain>
    </source>
</reference>
<reference key="5">
    <citation type="journal article" date="2008" name="J. Bacteriol.">
        <title>Hydrogen peroxide linked to lysine oxidase activity facilitates biofilm differentiation and dispersal in several gram-negative bacteria.</title>
        <authorList>
            <person name="Mai-Prochnow A."/>
            <person name="Lucas-Elio P."/>
            <person name="Egan S."/>
            <person name="Thomas T."/>
            <person name="Webb J.S."/>
            <person name="Sanchez-Amat A."/>
            <person name="Kjelleberg S."/>
        </authorList>
    </citation>
    <scope>FUNCTION</scope>
    <source>
        <strain>ATCC 700492 / JCM 21426 / NBRC 103028 / MMB-1</strain>
    </source>
</reference>
<reference key="6">
    <citation type="journal article" date="2010" name="Mol. Microbiol.">
        <title>Both genes in the Marinomonas mediterranea lodAB operon are required for the expression of the antimicrobial protein lysine oxidase.</title>
        <authorList>
            <person name="Gomez D."/>
            <person name="Lucas-Elio P."/>
            <person name="Solano F."/>
            <person name="Sanchez-Amat A."/>
        </authorList>
    </citation>
    <scope>FUNCTION</scope>
    <scope>COFACTOR</scope>
    <scope>SUBCELLULAR LOCATION</scope>
    <scope>OPERON STRUCTURE</scope>
    <source>
        <strain>ATCC 700492 / JCM 21426 / NBRC 103028 / MMB-1</strain>
    </source>
</reference>
<reference key="7">
    <citation type="journal article" date="2013" name="J. Biochem.">
        <title>X-ray crystallographic evidence for the presence of the cysteine tryptophylquinone cofactor in L-lysine epsilon-oxidase from Marinomonas mediterranea.</title>
        <authorList>
            <person name="Okazaki S."/>
            <person name="Nakano S."/>
            <person name="Matsui D."/>
            <person name="Akaji S."/>
            <person name="Inagaki K."/>
            <person name="Asano Y."/>
        </authorList>
    </citation>
    <scope>X-RAY CRYSTALLOGRAPHY (1.93 ANGSTROMS) IN COMPLEX WITH SULFATE AND COFACTOR</scope>
</reference>
<organism>
    <name type="scientific">Marinomonas mediterranea (strain ATCC 700492 / JCM 21426 / NBRC 103028 / MMB-1)</name>
    <dbReference type="NCBI Taxonomy" id="717774"/>
    <lineage>
        <taxon>Bacteria</taxon>
        <taxon>Pseudomonadati</taxon>
        <taxon>Pseudomonadota</taxon>
        <taxon>Gammaproteobacteria</taxon>
        <taxon>Oceanospirillales</taxon>
        <taxon>Oceanospirillaceae</taxon>
        <taxon>Marinomonas</taxon>
    </lineage>
</organism>
<evidence type="ECO:0000269" key="1">
    <source>
    </source>
</evidence>
<evidence type="ECO:0000269" key="2">
    <source>
    </source>
</evidence>
<evidence type="ECO:0000269" key="3">
    <source>
    </source>
</evidence>
<evidence type="ECO:0000269" key="4">
    <source>
    </source>
</evidence>
<evidence type="ECO:0000269" key="5">
    <source>
    </source>
</evidence>
<evidence type="ECO:0000269" key="6">
    <source>
    </source>
</evidence>
<evidence type="ECO:0000305" key="7"/>
<evidence type="ECO:0000305" key="8">
    <source>
    </source>
</evidence>
<evidence type="ECO:0007829" key="9">
    <source>
        <dbReference type="PDB" id="2YMW"/>
    </source>
</evidence>
<evidence type="ECO:0007829" key="10">
    <source>
        <dbReference type="PDB" id="3WEU"/>
    </source>
</evidence>
<evidence type="ECO:0007829" key="11">
    <source>
        <dbReference type="PDB" id="3WEV"/>
    </source>
</evidence>
<proteinExistence type="evidence at protein level"/>